<gene>
    <name evidence="1" type="primary">sepF</name>
    <name type="ordered locus">SSU05_0484</name>
</gene>
<protein>
    <recommendedName>
        <fullName evidence="1">Cell division protein SepF</fullName>
    </recommendedName>
</protein>
<comment type="function">
    <text evidence="1">Cell division protein that is part of the divisome complex and is recruited early to the Z-ring. Probably stimulates Z-ring formation, perhaps through the cross-linking of FtsZ protofilaments. Its function overlaps with FtsA.</text>
</comment>
<comment type="subunit">
    <text evidence="1">Homodimer. Interacts with FtsZ.</text>
</comment>
<comment type="subcellular location">
    <subcellularLocation>
        <location evidence="1">Cytoplasm</location>
    </subcellularLocation>
    <text evidence="1">Localizes to the division site, in a FtsZ-dependent manner.</text>
</comment>
<comment type="similarity">
    <text evidence="1">Belongs to the SepF family.</text>
</comment>
<comment type="sequence caution" evidence="2">
    <conflict type="erroneous initiation">
        <sequence resource="EMBL-CDS" id="ABP89450"/>
    </conflict>
</comment>
<accession>A4VTL1</accession>
<dbReference type="EMBL" id="CP000407">
    <property type="protein sequence ID" value="ABP89450.1"/>
    <property type="status" value="ALT_INIT"/>
    <property type="molecule type" value="Genomic_DNA"/>
</dbReference>
<dbReference type="SMR" id="A4VTL1"/>
<dbReference type="STRING" id="391295.SSU05_0484"/>
<dbReference type="KEGG" id="ssu:SSU05_0484"/>
<dbReference type="eggNOG" id="COG1799">
    <property type="taxonomic scope" value="Bacteria"/>
</dbReference>
<dbReference type="HOGENOM" id="CLU_078499_2_0_9"/>
<dbReference type="GO" id="GO:0005737">
    <property type="term" value="C:cytoplasm"/>
    <property type="evidence" value="ECO:0007669"/>
    <property type="project" value="UniProtKB-SubCell"/>
</dbReference>
<dbReference type="GO" id="GO:0000917">
    <property type="term" value="P:division septum assembly"/>
    <property type="evidence" value="ECO:0007669"/>
    <property type="project" value="UniProtKB-KW"/>
</dbReference>
<dbReference type="GO" id="GO:0043093">
    <property type="term" value="P:FtsZ-dependent cytokinesis"/>
    <property type="evidence" value="ECO:0007669"/>
    <property type="project" value="UniProtKB-UniRule"/>
</dbReference>
<dbReference type="Gene3D" id="3.30.110.150">
    <property type="entry name" value="SepF-like protein"/>
    <property type="match status" value="1"/>
</dbReference>
<dbReference type="HAMAP" id="MF_01197">
    <property type="entry name" value="SepF"/>
    <property type="match status" value="1"/>
</dbReference>
<dbReference type="InterPro" id="IPR023052">
    <property type="entry name" value="Cell_div_SepF"/>
</dbReference>
<dbReference type="InterPro" id="IPR007561">
    <property type="entry name" value="Cell_div_SepF/SepF-rel"/>
</dbReference>
<dbReference type="InterPro" id="IPR038594">
    <property type="entry name" value="SepF-like_sf"/>
</dbReference>
<dbReference type="PANTHER" id="PTHR35798">
    <property type="entry name" value="CELL DIVISION PROTEIN SEPF"/>
    <property type="match status" value="1"/>
</dbReference>
<dbReference type="PANTHER" id="PTHR35798:SF1">
    <property type="entry name" value="CELL DIVISION PROTEIN SEPF"/>
    <property type="match status" value="1"/>
</dbReference>
<dbReference type="Pfam" id="PF04472">
    <property type="entry name" value="SepF"/>
    <property type="match status" value="1"/>
</dbReference>
<feature type="chain" id="PRO_0000334110" description="Cell division protein SepF">
    <location>
        <begin position="1"/>
        <end position="187"/>
    </location>
</feature>
<keyword id="KW-0131">Cell cycle</keyword>
<keyword id="KW-0132">Cell division</keyword>
<keyword id="KW-0963">Cytoplasm</keyword>
<keyword id="KW-0717">Septation</keyword>
<organism>
    <name type="scientific">Streptococcus suis (strain 05ZYH33)</name>
    <dbReference type="NCBI Taxonomy" id="391295"/>
    <lineage>
        <taxon>Bacteria</taxon>
        <taxon>Bacillati</taxon>
        <taxon>Bacillota</taxon>
        <taxon>Bacilli</taxon>
        <taxon>Lactobacillales</taxon>
        <taxon>Streptococcaceae</taxon>
        <taxon>Streptococcus</taxon>
    </lineage>
</organism>
<evidence type="ECO:0000255" key="1">
    <source>
        <dbReference type="HAMAP-Rule" id="MF_01197"/>
    </source>
</evidence>
<evidence type="ECO:0000305" key="2"/>
<reference key="1">
    <citation type="journal article" date="2007" name="PLoS ONE">
        <title>A glimpse of streptococcal toxic shock syndrome from comparative genomics of S. suis 2 Chinese isolates.</title>
        <authorList>
            <person name="Chen C."/>
            <person name="Tang J."/>
            <person name="Dong W."/>
            <person name="Wang C."/>
            <person name="Feng Y."/>
            <person name="Wang J."/>
            <person name="Zheng F."/>
            <person name="Pan X."/>
            <person name="Liu D."/>
            <person name="Li M."/>
            <person name="Song Y."/>
            <person name="Zhu X."/>
            <person name="Sun H."/>
            <person name="Feng T."/>
            <person name="Guo Z."/>
            <person name="Ju A."/>
            <person name="Ge J."/>
            <person name="Dong Y."/>
            <person name="Sun W."/>
            <person name="Jiang Y."/>
            <person name="Wang J."/>
            <person name="Yan J."/>
            <person name="Yang H."/>
            <person name="Wang X."/>
            <person name="Gao G.F."/>
            <person name="Yang R."/>
            <person name="Wang J."/>
            <person name="Yu J."/>
        </authorList>
    </citation>
    <scope>NUCLEOTIDE SEQUENCE [LARGE SCALE GENOMIC DNA]</scope>
    <source>
        <strain>05ZYH33</strain>
    </source>
</reference>
<proteinExistence type="inferred from homology"/>
<sequence>MALKDTFKNLFNYFEVDEVNEVEEQADAYSMPNDRPKMRVANTTVAPVREQQPKVETRREARSESQLQRLHERQQELMTNNNEKEIVKTTIDIKFPKRYEDAPEMVNLLLDNASILIDFQYMSEQQARRCLDYLDGARSVLSGNLKKVSNTMWLLTPVNVTVNIEELRNAGTTTGVADSNFEFDIKR</sequence>
<name>SEPF_STRSY</name>